<proteinExistence type="inferred from homology"/>
<sequence length="342" mass="38353">MTIALTGGGTGGHLAIVRCLLESAIKKNIECVYIGSQNGQDKAWFENEARFKEKFFLSSKGVVNQNKFGKISSLLHTLKLSKDCREIFKKYHIQAVFSVGGYSAAPASFAALFSHLPLFIHEQNSKSGSLNMLLKPFATKFFSAFEKEFSPYPVANKFFDNARIRKELKNIIFLGGSQGAQFINELALNLAPKLQEQNIKIIHQCGKNDFEKCKKHYQSLNIQADVFDFSSNLGEKMKNADLAISRAGASTLFELCANTLPAIFIPYPYATKNHQYFNAKFLQDQALCQIFTQDSINLDDFFKAMLKLNLEDISTRLQNIAQKNGGDILLEKALSNNLAFIR</sequence>
<dbReference type="EC" id="2.4.1.227" evidence="1"/>
<dbReference type="EMBL" id="CP000768">
    <property type="protein sequence ID" value="ABS43706.1"/>
    <property type="molecule type" value="Genomic_DNA"/>
</dbReference>
<dbReference type="SMR" id="A7H2Z9"/>
<dbReference type="CAZy" id="GT28">
    <property type="family name" value="Glycosyltransferase Family 28"/>
</dbReference>
<dbReference type="KEGG" id="cjd:JJD26997_0743"/>
<dbReference type="HOGENOM" id="CLU_037404_2_1_7"/>
<dbReference type="UniPathway" id="UPA00219"/>
<dbReference type="Proteomes" id="UP000002302">
    <property type="component" value="Chromosome"/>
</dbReference>
<dbReference type="GO" id="GO:0005886">
    <property type="term" value="C:plasma membrane"/>
    <property type="evidence" value="ECO:0007669"/>
    <property type="project" value="UniProtKB-SubCell"/>
</dbReference>
<dbReference type="GO" id="GO:0051991">
    <property type="term" value="F:UDP-N-acetyl-D-glucosamine:N-acetylmuramoyl-L-alanyl-D-glutamyl-meso-2,6-diaminopimelyl-D-alanyl-D-alanine-diphosphoundecaprenol 4-beta-N-acetylglucosaminlytransferase activity"/>
    <property type="evidence" value="ECO:0007669"/>
    <property type="project" value="RHEA"/>
</dbReference>
<dbReference type="GO" id="GO:0050511">
    <property type="term" value="F:undecaprenyldiphospho-muramoylpentapeptide beta-N-acetylglucosaminyltransferase activity"/>
    <property type="evidence" value="ECO:0007669"/>
    <property type="project" value="UniProtKB-UniRule"/>
</dbReference>
<dbReference type="GO" id="GO:0005975">
    <property type="term" value="P:carbohydrate metabolic process"/>
    <property type="evidence" value="ECO:0007669"/>
    <property type="project" value="InterPro"/>
</dbReference>
<dbReference type="GO" id="GO:0051301">
    <property type="term" value="P:cell division"/>
    <property type="evidence" value="ECO:0007669"/>
    <property type="project" value="UniProtKB-KW"/>
</dbReference>
<dbReference type="GO" id="GO:0071555">
    <property type="term" value="P:cell wall organization"/>
    <property type="evidence" value="ECO:0007669"/>
    <property type="project" value="UniProtKB-KW"/>
</dbReference>
<dbReference type="GO" id="GO:0030259">
    <property type="term" value="P:lipid glycosylation"/>
    <property type="evidence" value="ECO:0007669"/>
    <property type="project" value="UniProtKB-UniRule"/>
</dbReference>
<dbReference type="GO" id="GO:0009252">
    <property type="term" value="P:peptidoglycan biosynthetic process"/>
    <property type="evidence" value="ECO:0007669"/>
    <property type="project" value="UniProtKB-UniRule"/>
</dbReference>
<dbReference type="GO" id="GO:0008360">
    <property type="term" value="P:regulation of cell shape"/>
    <property type="evidence" value="ECO:0007669"/>
    <property type="project" value="UniProtKB-KW"/>
</dbReference>
<dbReference type="CDD" id="cd03785">
    <property type="entry name" value="GT28_MurG"/>
    <property type="match status" value="1"/>
</dbReference>
<dbReference type="Gene3D" id="3.40.50.2000">
    <property type="entry name" value="Glycogen Phosphorylase B"/>
    <property type="match status" value="2"/>
</dbReference>
<dbReference type="HAMAP" id="MF_00033">
    <property type="entry name" value="MurG"/>
    <property type="match status" value="1"/>
</dbReference>
<dbReference type="InterPro" id="IPR006009">
    <property type="entry name" value="GlcNAc_MurG"/>
</dbReference>
<dbReference type="InterPro" id="IPR007235">
    <property type="entry name" value="Glyco_trans_28_C"/>
</dbReference>
<dbReference type="InterPro" id="IPR004276">
    <property type="entry name" value="GlycoTrans_28_N"/>
</dbReference>
<dbReference type="NCBIfam" id="TIGR01133">
    <property type="entry name" value="murG"/>
    <property type="match status" value="1"/>
</dbReference>
<dbReference type="PANTHER" id="PTHR21015:SF22">
    <property type="entry name" value="GLYCOSYLTRANSFERASE"/>
    <property type="match status" value="1"/>
</dbReference>
<dbReference type="PANTHER" id="PTHR21015">
    <property type="entry name" value="UDP-N-ACETYLGLUCOSAMINE--N-ACETYLMURAMYL-(PENTAPEPTIDE) PYROPHOSPHORYL-UNDECAPRENOL N-ACETYLGLUCOSAMINE TRANSFERASE 1"/>
    <property type="match status" value="1"/>
</dbReference>
<dbReference type="Pfam" id="PF04101">
    <property type="entry name" value="Glyco_tran_28_C"/>
    <property type="match status" value="1"/>
</dbReference>
<dbReference type="Pfam" id="PF03033">
    <property type="entry name" value="Glyco_transf_28"/>
    <property type="match status" value="1"/>
</dbReference>
<dbReference type="SUPFAM" id="SSF53756">
    <property type="entry name" value="UDP-Glycosyltransferase/glycogen phosphorylase"/>
    <property type="match status" value="1"/>
</dbReference>
<gene>
    <name evidence="1" type="primary">murG</name>
    <name type="ordered locus">JJD26997_0743</name>
</gene>
<feature type="chain" id="PRO_1000057246" description="UDP-N-acetylglucosamine--N-acetylmuramyl-(pentapeptide) pyrophosphoryl-undecaprenol N-acetylglucosamine transferase">
    <location>
        <begin position="1"/>
        <end position="342"/>
    </location>
</feature>
<feature type="binding site" evidence="1">
    <location>
        <begin position="10"/>
        <end position="12"/>
    </location>
    <ligand>
        <name>UDP-N-acetyl-alpha-D-glucosamine</name>
        <dbReference type="ChEBI" id="CHEBI:57705"/>
    </ligand>
</feature>
<feature type="binding site" evidence="1">
    <location>
        <position position="124"/>
    </location>
    <ligand>
        <name>UDP-N-acetyl-alpha-D-glucosamine</name>
        <dbReference type="ChEBI" id="CHEBI:57705"/>
    </ligand>
</feature>
<feature type="binding site" evidence="1">
    <location>
        <position position="177"/>
    </location>
    <ligand>
        <name>UDP-N-acetyl-alpha-D-glucosamine</name>
        <dbReference type="ChEBI" id="CHEBI:57705"/>
    </ligand>
</feature>
<feature type="binding site" evidence="1">
    <location>
        <position position="275"/>
    </location>
    <ligand>
        <name>UDP-N-acetyl-alpha-D-glucosamine</name>
        <dbReference type="ChEBI" id="CHEBI:57705"/>
    </ligand>
</feature>
<keyword id="KW-0131">Cell cycle</keyword>
<keyword id="KW-0132">Cell division</keyword>
<keyword id="KW-0997">Cell inner membrane</keyword>
<keyword id="KW-1003">Cell membrane</keyword>
<keyword id="KW-0133">Cell shape</keyword>
<keyword id="KW-0961">Cell wall biogenesis/degradation</keyword>
<keyword id="KW-0328">Glycosyltransferase</keyword>
<keyword id="KW-0472">Membrane</keyword>
<keyword id="KW-0573">Peptidoglycan synthesis</keyword>
<keyword id="KW-0808">Transferase</keyword>
<name>MURG_CAMJD</name>
<accession>A7H2Z9</accession>
<protein>
    <recommendedName>
        <fullName evidence="1">UDP-N-acetylglucosamine--N-acetylmuramyl-(pentapeptide) pyrophosphoryl-undecaprenol N-acetylglucosamine transferase</fullName>
        <ecNumber evidence="1">2.4.1.227</ecNumber>
    </recommendedName>
    <alternativeName>
        <fullName evidence="1">Undecaprenyl-PP-MurNAc-pentapeptide-UDPGlcNAc GlcNAc transferase</fullName>
    </alternativeName>
</protein>
<comment type="function">
    <text evidence="1">Cell wall formation. Catalyzes the transfer of a GlcNAc subunit on undecaprenyl-pyrophosphoryl-MurNAc-pentapeptide (lipid intermediate I) to form undecaprenyl-pyrophosphoryl-MurNAc-(pentapeptide)GlcNAc (lipid intermediate II).</text>
</comment>
<comment type="catalytic activity">
    <reaction evidence="1">
        <text>di-trans,octa-cis-undecaprenyl diphospho-N-acetyl-alpha-D-muramoyl-L-alanyl-D-glutamyl-meso-2,6-diaminopimeloyl-D-alanyl-D-alanine + UDP-N-acetyl-alpha-D-glucosamine = di-trans,octa-cis-undecaprenyl diphospho-[N-acetyl-alpha-D-glucosaminyl-(1-&gt;4)]-N-acetyl-alpha-D-muramoyl-L-alanyl-D-glutamyl-meso-2,6-diaminopimeloyl-D-alanyl-D-alanine + UDP + H(+)</text>
        <dbReference type="Rhea" id="RHEA:31227"/>
        <dbReference type="ChEBI" id="CHEBI:15378"/>
        <dbReference type="ChEBI" id="CHEBI:57705"/>
        <dbReference type="ChEBI" id="CHEBI:58223"/>
        <dbReference type="ChEBI" id="CHEBI:61387"/>
        <dbReference type="ChEBI" id="CHEBI:61388"/>
        <dbReference type="EC" id="2.4.1.227"/>
    </reaction>
</comment>
<comment type="pathway">
    <text evidence="1">Cell wall biogenesis; peptidoglycan biosynthesis.</text>
</comment>
<comment type="subcellular location">
    <subcellularLocation>
        <location evidence="1">Cell inner membrane</location>
        <topology evidence="1">Peripheral membrane protein</topology>
        <orientation evidence="1">Cytoplasmic side</orientation>
    </subcellularLocation>
</comment>
<comment type="similarity">
    <text evidence="1">Belongs to the glycosyltransferase 28 family. MurG subfamily.</text>
</comment>
<organism>
    <name type="scientific">Campylobacter jejuni subsp. doylei (strain ATCC BAA-1458 / RM4099 / 269.97)</name>
    <dbReference type="NCBI Taxonomy" id="360109"/>
    <lineage>
        <taxon>Bacteria</taxon>
        <taxon>Pseudomonadati</taxon>
        <taxon>Campylobacterota</taxon>
        <taxon>Epsilonproteobacteria</taxon>
        <taxon>Campylobacterales</taxon>
        <taxon>Campylobacteraceae</taxon>
        <taxon>Campylobacter</taxon>
    </lineage>
</organism>
<reference key="1">
    <citation type="submission" date="2007-07" db="EMBL/GenBank/DDBJ databases">
        <title>Complete genome sequence of Campylobacter jejuni subsp doylei 269.97 isolated from human blood.</title>
        <authorList>
            <person name="Fouts D.E."/>
            <person name="Mongodin E.F."/>
            <person name="Puiu D."/>
            <person name="Sebastian Y."/>
            <person name="Miller W.G."/>
            <person name="Mandrell R.E."/>
            <person name="Lastovica A.J."/>
            <person name="Nelson K.E."/>
        </authorList>
    </citation>
    <scope>NUCLEOTIDE SEQUENCE [LARGE SCALE GENOMIC DNA]</scope>
    <source>
        <strain>ATCC BAA-1458 / RM4099 / 269.97</strain>
    </source>
</reference>
<evidence type="ECO:0000255" key="1">
    <source>
        <dbReference type="HAMAP-Rule" id="MF_00033"/>
    </source>
</evidence>